<feature type="chain" id="PRO_0000339881" description="Protein PBDC1 homolog">
    <location>
        <begin position="1"/>
        <end position="147"/>
    </location>
</feature>
<organism>
    <name type="scientific">Schizosaccharomyces pombe (strain 972 / ATCC 24843)</name>
    <name type="common">Fission yeast</name>
    <dbReference type="NCBI Taxonomy" id="284812"/>
    <lineage>
        <taxon>Eukaryota</taxon>
        <taxon>Fungi</taxon>
        <taxon>Dikarya</taxon>
        <taxon>Ascomycota</taxon>
        <taxon>Taphrinomycotina</taxon>
        <taxon>Schizosaccharomycetes</taxon>
        <taxon>Schizosaccharomycetales</taxon>
        <taxon>Schizosaccharomycetaceae</taxon>
        <taxon>Schizosaccharomyces</taxon>
    </lineage>
</organism>
<protein>
    <recommendedName>
        <fullName>Protein PBDC1 homolog</fullName>
    </recommendedName>
</protein>
<name>YHX7_SCHPO</name>
<comment type="subcellular location">
    <subcellularLocation>
        <location evidence="1">Cytoplasm</location>
    </subcellularLocation>
    <subcellularLocation>
        <location evidence="1">Nucleus</location>
    </subcellularLocation>
</comment>
<comment type="similarity">
    <text evidence="2">Belongs to the PBDC1 family.</text>
</comment>
<proteinExistence type="inferred from homology"/>
<accession>O59727</accession>
<reference key="1">
    <citation type="journal article" date="2002" name="Nature">
        <title>The genome sequence of Schizosaccharomyces pombe.</title>
        <authorList>
            <person name="Wood V."/>
            <person name="Gwilliam R."/>
            <person name="Rajandream M.A."/>
            <person name="Lyne M.H."/>
            <person name="Lyne R."/>
            <person name="Stewart A."/>
            <person name="Sgouros J.G."/>
            <person name="Peat N."/>
            <person name="Hayles J."/>
            <person name="Baker S.G."/>
            <person name="Basham D."/>
            <person name="Bowman S."/>
            <person name="Brooks K."/>
            <person name="Brown D."/>
            <person name="Brown S."/>
            <person name="Chillingworth T."/>
            <person name="Churcher C.M."/>
            <person name="Collins M."/>
            <person name="Connor R."/>
            <person name="Cronin A."/>
            <person name="Davis P."/>
            <person name="Feltwell T."/>
            <person name="Fraser A."/>
            <person name="Gentles S."/>
            <person name="Goble A."/>
            <person name="Hamlin N."/>
            <person name="Harris D.E."/>
            <person name="Hidalgo J."/>
            <person name="Hodgson G."/>
            <person name="Holroyd S."/>
            <person name="Hornsby T."/>
            <person name="Howarth S."/>
            <person name="Huckle E.J."/>
            <person name="Hunt S."/>
            <person name="Jagels K."/>
            <person name="James K.D."/>
            <person name="Jones L."/>
            <person name="Jones M."/>
            <person name="Leather S."/>
            <person name="McDonald S."/>
            <person name="McLean J."/>
            <person name="Mooney P."/>
            <person name="Moule S."/>
            <person name="Mungall K.L."/>
            <person name="Murphy L.D."/>
            <person name="Niblett D."/>
            <person name="Odell C."/>
            <person name="Oliver K."/>
            <person name="O'Neil S."/>
            <person name="Pearson D."/>
            <person name="Quail M.A."/>
            <person name="Rabbinowitsch E."/>
            <person name="Rutherford K.M."/>
            <person name="Rutter S."/>
            <person name="Saunders D."/>
            <person name="Seeger K."/>
            <person name="Sharp S."/>
            <person name="Skelton J."/>
            <person name="Simmonds M.N."/>
            <person name="Squares R."/>
            <person name="Squares S."/>
            <person name="Stevens K."/>
            <person name="Taylor K."/>
            <person name="Taylor R.G."/>
            <person name="Tivey A."/>
            <person name="Walsh S.V."/>
            <person name="Warren T."/>
            <person name="Whitehead S."/>
            <person name="Woodward J.R."/>
            <person name="Volckaert G."/>
            <person name="Aert R."/>
            <person name="Robben J."/>
            <person name="Grymonprez B."/>
            <person name="Weltjens I."/>
            <person name="Vanstreels E."/>
            <person name="Rieger M."/>
            <person name="Schaefer M."/>
            <person name="Mueller-Auer S."/>
            <person name="Gabel C."/>
            <person name="Fuchs M."/>
            <person name="Duesterhoeft A."/>
            <person name="Fritzc C."/>
            <person name="Holzer E."/>
            <person name="Moestl D."/>
            <person name="Hilbert H."/>
            <person name="Borzym K."/>
            <person name="Langer I."/>
            <person name="Beck A."/>
            <person name="Lehrach H."/>
            <person name="Reinhardt R."/>
            <person name="Pohl T.M."/>
            <person name="Eger P."/>
            <person name="Zimmermann W."/>
            <person name="Wedler H."/>
            <person name="Wambutt R."/>
            <person name="Purnelle B."/>
            <person name="Goffeau A."/>
            <person name="Cadieu E."/>
            <person name="Dreano S."/>
            <person name="Gloux S."/>
            <person name="Lelaure V."/>
            <person name="Mottier S."/>
            <person name="Galibert F."/>
            <person name="Aves S.J."/>
            <person name="Xiang Z."/>
            <person name="Hunt C."/>
            <person name="Moore K."/>
            <person name="Hurst S.M."/>
            <person name="Lucas M."/>
            <person name="Rochet M."/>
            <person name="Gaillardin C."/>
            <person name="Tallada V.A."/>
            <person name="Garzon A."/>
            <person name="Thode G."/>
            <person name="Daga R.R."/>
            <person name="Cruzado L."/>
            <person name="Jimenez J."/>
            <person name="Sanchez M."/>
            <person name="del Rey F."/>
            <person name="Benito J."/>
            <person name="Dominguez A."/>
            <person name="Revuelta J.L."/>
            <person name="Moreno S."/>
            <person name="Armstrong J."/>
            <person name="Forsburg S.L."/>
            <person name="Cerutti L."/>
            <person name="Lowe T."/>
            <person name="McCombie W.R."/>
            <person name="Paulsen I."/>
            <person name="Potashkin J."/>
            <person name="Shpakovski G.V."/>
            <person name="Ussery D."/>
            <person name="Barrell B.G."/>
            <person name="Nurse P."/>
        </authorList>
    </citation>
    <scope>NUCLEOTIDE SEQUENCE [LARGE SCALE GENOMIC DNA]</scope>
    <source>
        <strain>972 / ATCC 24843</strain>
    </source>
</reference>
<reference key="2">
    <citation type="journal article" date="2006" name="Nat. Biotechnol.">
        <title>ORFeome cloning and global analysis of protein localization in the fission yeast Schizosaccharomyces pombe.</title>
        <authorList>
            <person name="Matsuyama A."/>
            <person name="Arai R."/>
            <person name="Yashiroda Y."/>
            <person name="Shirai A."/>
            <person name="Kamata A."/>
            <person name="Sekido S."/>
            <person name="Kobayashi Y."/>
            <person name="Hashimoto A."/>
            <person name="Hamamoto M."/>
            <person name="Hiraoka Y."/>
            <person name="Horinouchi S."/>
            <person name="Yoshida M."/>
        </authorList>
    </citation>
    <scope>SUBCELLULAR LOCATION [LARGE SCALE ANALYSIS]</scope>
</reference>
<sequence length="147" mass="17405">MLSTKIDAENAENAAEIEMQFAVKAVEQAQIYWSLLEMRKGSELKLTKYDDEIFEDLINTFPEFKDPKTASFVNEDEMKSAKGKAAWRPFLMRYEKKVDDYNFGTLLRIKNTDEYEQETTIFVPRMQFLAYEIARNRYGLNDWIKKD</sequence>
<dbReference type="EMBL" id="CU329671">
    <property type="protein sequence ID" value="CAA19020.1"/>
    <property type="molecule type" value="Genomic_DNA"/>
</dbReference>
<dbReference type="PIR" id="T40381">
    <property type="entry name" value="T40381"/>
</dbReference>
<dbReference type="RefSeq" id="NP_596094.1">
    <property type="nucleotide sequence ID" value="NM_001022010.2"/>
</dbReference>
<dbReference type="SMR" id="O59727"/>
<dbReference type="BioGRID" id="277517">
    <property type="interactions" value="9"/>
</dbReference>
<dbReference type="FunCoup" id="O59727">
    <property type="interactions" value="510"/>
</dbReference>
<dbReference type="STRING" id="284812.O59727"/>
<dbReference type="PaxDb" id="4896-SPBC3E7.07c.1"/>
<dbReference type="EnsemblFungi" id="SPBC3E7.07c.1">
    <property type="protein sequence ID" value="SPBC3E7.07c.1:pep"/>
    <property type="gene ID" value="SPBC3E7.07c"/>
</dbReference>
<dbReference type="KEGG" id="spo:2541002"/>
<dbReference type="PomBase" id="SPBC3E7.07c"/>
<dbReference type="VEuPathDB" id="FungiDB:SPBC3E7.07c"/>
<dbReference type="eggNOG" id="KOG4093">
    <property type="taxonomic scope" value="Eukaryota"/>
</dbReference>
<dbReference type="HOGENOM" id="CLU_103791_1_0_1"/>
<dbReference type="InParanoid" id="O59727"/>
<dbReference type="OMA" id="IQFYAFE"/>
<dbReference type="PhylomeDB" id="O59727"/>
<dbReference type="PRO" id="PR:O59727"/>
<dbReference type="Proteomes" id="UP000002485">
    <property type="component" value="Chromosome II"/>
</dbReference>
<dbReference type="GO" id="GO:0005829">
    <property type="term" value="C:cytosol"/>
    <property type="evidence" value="ECO:0007005"/>
    <property type="project" value="PomBase"/>
</dbReference>
<dbReference type="GO" id="GO:0005634">
    <property type="term" value="C:nucleus"/>
    <property type="evidence" value="ECO:0007005"/>
    <property type="project" value="PomBase"/>
</dbReference>
<dbReference type="FunFam" id="1.10.3560.10:FF:000001">
    <property type="entry name" value="Protein PBDC1 homolog"/>
    <property type="match status" value="1"/>
</dbReference>
<dbReference type="Gene3D" id="1.10.3560.10">
    <property type="entry name" value="yst0336 like domain"/>
    <property type="match status" value="1"/>
</dbReference>
<dbReference type="InterPro" id="IPR023139">
    <property type="entry name" value="PBDC1-like_dom_sf"/>
</dbReference>
<dbReference type="InterPro" id="IPR008476">
    <property type="entry name" value="PBDC1_metazoa/fungi"/>
</dbReference>
<dbReference type="InterPro" id="IPR021148">
    <property type="entry name" value="Polysacc_synth_dom"/>
</dbReference>
<dbReference type="PANTHER" id="PTHR13410">
    <property type="entry name" value="PROTEIN PBDC1"/>
    <property type="match status" value="1"/>
</dbReference>
<dbReference type="PANTHER" id="PTHR13410:SF9">
    <property type="entry name" value="PROTEIN PBDC1"/>
    <property type="match status" value="1"/>
</dbReference>
<dbReference type="Pfam" id="PF04669">
    <property type="entry name" value="PBDC1"/>
    <property type="match status" value="1"/>
</dbReference>
<evidence type="ECO:0000269" key="1">
    <source>
    </source>
</evidence>
<evidence type="ECO:0000305" key="2"/>
<keyword id="KW-0963">Cytoplasm</keyword>
<keyword id="KW-0539">Nucleus</keyword>
<keyword id="KW-1185">Reference proteome</keyword>
<gene>
    <name type="ORF">SPBC3E7.07c</name>
</gene>